<reference key="1">
    <citation type="journal article" date="2001" name="Science">
        <title>Mechanisms of evolution in Rickettsia conorii and R. prowazekii.</title>
        <authorList>
            <person name="Ogata H."/>
            <person name="Audic S."/>
            <person name="Renesto-Audiffren P."/>
            <person name="Fournier P.-E."/>
            <person name="Barbe V."/>
            <person name="Samson D."/>
            <person name="Roux V."/>
            <person name="Cossart P."/>
            <person name="Weissenbach J."/>
            <person name="Claverie J.-M."/>
            <person name="Raoult D."/>
        </authorList>
    </citation>
    <scope>NUCLEOTIDE SEQUENCE [LARGE SCALE GENOMIC DNA]</scope>
    <source>
        <strain>ATCC VR-613 / Malish 7</strain>
    </source>
</reference>
<protein>
    <recommendedName>
        <fullName evidence="1">Crossover junction endodeoxyribonuclease RuvC</fullName>
        <ecNumber evidence="1">3.1.21.10</ecNumber>
    </recommendedName>
    <alternativeName>
        <fullName evidence="1">Holliday junction nuclease RuvC</fullName>
    </alternativeName>
    <alternativeName>
        <fullName evidence="1">Holliday junction resolvase RuvC</fullName>
    </alternativeName>
</protein>
<proteinExistence type="inferred from homology"/>
<name>RUVC_RICCN</name>
<keyword id="KW-0963">Cytoplasm</keyword>
<keyword id="KW-0227">DNA damage</keyword>
<keyword id="KW-0233">DNA recombination</keyword>
<keyword id="KW-0234">DNA repair</keyword>
<keyword id="KW-0238">DNA-binding</keyword>
<keyword id="KW-0255">Endonuclease</keyword>
<keyword id="KW-0378">Hydrolase</keyword>
<keyword id="KW-0460">Magnesium</keyword>
<keyword id="KW-0479">Metal-binding</keyword>
<keyword id="KW-0540">Nuclease</keyword>
<gene>
    <name evidence="1" type="primary">ruvC</name>
    <name type="ordered locus">RC0159</name>
</gene>
<organism>
    <name type="scientific">Rickettsia conorii (strain ATCC VR-613 / Malish 7)</name>
    <dbReference type="NCBI Taxonomy" id="272944"/>
    <lineage>
        <taxon>Bacteria</taxon>
        <taxon>Pseudomonadati</taxon>
        <taxon>Pseudomonadota</taxon>
        <taxon>Alphaproteobacteria</taxon>
        <taxon>Rickettsiales</taxon>
        <taxon>Rickettsiaceae</taxon>
        <taxon>Rickettsieae</taxon>
        <taxon>Rickettsia</taxon>
        <taxon>spotted fever group</taxon>
    </lineage>
</organism>
<comment type="function">
    <text evidence="1">The RuvA-RuvB-RuvC complex processes Holliday junction (HJ) DNA during genetic recombination and DNA repair. Endonuclease that resolves HJ intermediates. Cleaves cruciform DNA by making single-stranded nicks across the HJ at symmetrical positions within the homologous arms, yielding a 5'-phosphate and a 3'-hydroxyl group; requires a central core of homology in the junction. The consensus cleavage sequence is 5'-(A/T)TT(C/G)-3'. Cleavage occurs on the 3'-side of the TT dinucleotide at the point of strand exchange. HJ branch migration catalyzed by RuvA-RuvB allows RuvC to scan DNA until it finds its consensus sequence, where it cleaves and resolves the cruciform DNA.</text>
</comment>
<comment type="catalytic activity">
    <reaction evidence="1">
        <text>Endonucleolytic cleavage at a junction such as a reciprocal single-stranded crossover between two homologous DNA duplexes (Holliday junction).</text>
        <dbReference type="EC" id="3.1.21.10"/>
    </reaction>
</comment>
<comment type="cofactor">
    <cofactor evidence="1">
        <name>Mg(2+)</name>
        <dbReference type="ChEBI" id="CHEBI:18420"/>
    </cofactor>
    <text evidence="1">Binds 2 Mg(2+) ion per subunit.</text>
</comment>
<comment type="subunit">
    <text evidence="1">Homodimer which binds Holliday junction (HJ) DNA. The HJ becomes 2-fold symmetrical on binding to RuvC with unstacked arms; it has a different conformation from HJ DNA in complex with RuvA. In the full resolvosome a probable DNA-RuvA(4)-RuvB(12)-RuvC(2) complex forms which resolves the HJ.</text>
</comment>
<comment type="subcellular location">
    <subcellularLocation>
        <location evidence="1">Cytoplasm</location>
    </subcellularLocation>
</comment>
<comment type="similarity">
    <text evidence="1">Belongs to the RuvC family.</text>
</comment>
<evidence type="ECO:0000255" key="1">
    <source>
        <dbReference type="HAMAP-Rule" id="MF_00034"/>
    </source>
</evidence>
<feature type="chain" id="PRO_0000183128" description="Crossover junction endodeoxyribonuclease RuvC">
    <location>
        <begin position="1"/>
        <end position="157"/>
    </location>
</feature>
<feature type="active site" evidence="1">
    <location>
        <position position="7"/>
    </location>
</feature>
<feature type="active site" evidence="1">
    <location>
        <position position="67"/>
    </location>
</feature>
<feature type="active site" evidence="1">
    <location>
        <position position="140"/>
    </location>
</feature>
<feature type="binding site" evidence="1">
    <location>
        <position position="7"/>
    </location>
    <ligand>
        <name>Mg(2+)</name>
        <dbReference type="ChEBI" id="CHEBI:18420"/>
        <label>1</label>
    </ligand>
</feature>
<feature type="binding site" evidence="1">
    <location>
        <position position="67"/>
    </location>
    <ligand>
        <name>Mg(2+)</name>
        <dbReference type="ChEBI" id="CHEBI:18420"/>
        <label>2</label>
    </ligand>
</feature>
<feature type="binding site" evidence="1">
    <location>
        <position position="140"/>
    </location>
    <ligand>
        <name>Mg(2+)</name>
        <dbReference type="ChEBI" id="CHEBI:18420"/>
        <label>1</label>
    </ligand>
</feature>
<dbReference type="EC" id="3.1.21.10" evidence="1"/>
<dbReference type="EMBL" id="AE006914">
    <property type="protein sequence ID" value="AAL02697.1"/>
    <property type="molecule type" value="Genomic_DNA"/>
</dbReference>
<dbReference type="PIR" id="G97719">
    <property type="entry name" value="G97719"/>
</dbReference>
<dbReference type="RefSeq" id="WP_010976835.1">
    <property type="nucleotide sequence ID" value="NC_003103.1"/>
</dbReference>
<dbReference type="SMR" id="Q92JA8"/>
<dbReference type="GeneID" id="928029"/>
<dbReference type="KEGG" id="rco:RC0159"/>
<dbReference type="PATRIC" id="fig|272944.4.peg.188"/>
<dbReference type="HOGENOM" id="CLU_091257_1_0_5"/>
<dbReference type="Proteomes" id="UP000000816">
    <property type="component" value="Chromosome"/>
</dbReference>
<dbReference type="GO" id="GO:0005737">
    <property type="term" value="C:cytoplasm"/>
    <property type="evidence" value="ECO:0007669"/>
    <property type="project" value="UniProtKB-SubCell"/>
</dbReference>
<dbReference type="GO" id="GO:0048476">
    <property type="term" value="C:Holliday junction resolvase complex"/>
    <property type="evidence" value="ECO:0007669"/>
    <property type="project" value="UniProtKB-UniRule"/>
</dbReference>
<dbReference type="GO" id="GO:0008821">
    <property type="term" value="F:crossover junction DNA endonuclease activity"/>
    <property type="evidence" value="ECO:0007669"/>
    <property type="project" value="UniProtKB-UniRule"/>
</dbReference>
<dbReference type="GO" id="GO:0003677">
    <property type="term" value="F:DNA binding"/>
    <property type="evidence" value="ECO:0007669"/>
    <property type="project" value="UniProtKB-KW"/>
</dbReference>
<dbReference type="GO" id="GO:0000287">
    <property type="term" value="F:magnesium ion binding"/>
    <property type="evidence" value="ECO:0007669"/>
    <property type="project" value="UniProtKB-UniRule"/>
</dbReference>
<dbReference type="GO" id="GO:0006310">
    <property type="term" value="P:DNA recombination"/>
    <property type="evidence" value="ECO:0007669"/>
    <property type="project" value="UniProtKB-UniRule"/>
</dbReference>
<dbReference type="GO" id="GO:0006281">
    <property type="term" value="P:DNA repair"/>
    <property type="evidence" value="ECO:0007669"/>
    <property type="project" value="UniProtKB-UniRule"/>
</dbReference>
<dbReference type="CDD" id="cd16962">
    <property type="entry name" value="RuvC"/>
    <property type="match status" value="1"/>
</dbReference>
<dbReference type="FunFam" id="3.30.420.10:FF:000002">
    <property type="entry name" value="Crossover junction endodeoxyribonuclease RuvC"/>
    <property type="match status" value="1"/>
</dbReference>
<dbReference type="Gene3D" id="3.30.420.10">
    <property type="entry name" value="Ribonuclease H-like superfamily/Ribonuclease H"/>
    <property type="match status" value="1"/>
</dbReference>
<dbReference type="HAMAP" id="MF_00034">
    <property type="entry name" value="RuvC"/>
    <property type="match status" value="1"/>
</dbReference>
<dbReference type="InterPro" id="IPR012337">
    <property type="entry name" value="RNaseH-like_sf"/>
</dbReference>
<dbReference type="InterPro" id="IPR036397">
    <property type="entry name" value="RNaseH_sf"/>
</dbReference>
<dbReference type="InterPro" id="IPR020563">
    <property type="entry name" value="X-over_junc_endoDNase_Mg_BS"/>
</dbReference>
<dbReference type="InterPro" id="IPR002176">
    <property type="entry name" value="X-over_junc_endoDNase_RuvC"/>
</dbReference>
<dbReference type="NCBIfam" id="TIGR00228">
    <property type="entry name" value="ruvC"/>
    <property type="match status" value="1"/>
</dbReference>
<dbReference type="PANTHER" id="PTHR30194">
    <property type="entry name" value="CROSSOVER JUNCTION ENDODEOXYRIBONUCLEASE RUVC"/>
    <property type="match status" value="1"/>
</dbReference>
<dbReference type="PANTHER" id="PTHR30194:SF3">
    <property type="entry name" value="CROSSOVER JUNCTION ENDODEOXYRIBONUCLEASE RUVC"/>
    <property type="match status" value="1"/>
</dbReference>
<dbReference type="Pfam" id="PF02075">
    <property type="entry name" value="RuvC"/>
    <property type="match status" value="1"/>
</dbReference>
<dbReference type="PRINTS" id="PR00696">
    <property type="entry name" value="RSOLVASERUVC"/>
</dbReference>
<dbReference type="SUPFAM" id="SSF53098">
    <property type="entry name" value="Ribonuclease H-like"/>
    <property type="match status" value="1"/>
</dbReference>
<dbReference type="PROSITE" id="PS01321">
    <property type="entry name" value="RUVC"/>
    <property type="match status" value="1"/>
</dbReference>
<accession>Q92JA8</accession>
<sequence>MIILGIDPALGSLGWAVVAKETAQLKYLASGIIRTNSKDAIHHRLAFINSTLEKVILEYQPNMVAIEETFVNTNSVTSLKLGYARGAIMSLIGRYNLDMREFKPNTVKKTVTGYGHAEKDQMLHMIKLLLSGTALITNSDEADAVAIAYTCLVTKNY</sequence>